<organism>
    <name type="scientific">Methylobacterium radiotolerans (strain ATCC 27329 / DSM 1819 / JCM 2831 / NBRC 15690 / NCIMB 10815 / 0-1)</name>
    <dbReference type="NCBI Taxonomy" id="426355"/>
    <lineage>
        <taxon>Bacteria</taxon>
        <taxon>Pseudomonadati</taxon>
        <taxon>Pseudomonadota</taxon>
        <taxon>Alphaproteobacteria</taxon>
        <taxon>Hyphomicrobiales</taxon>
        <taxon>Methylobacteriaceae</taxon>
        <taxon>Methylobacterium</taxon>
    </lineage>
</organism>
<gene>
    <name evidence="1" type="primary">hisE</name>
    <name type="ordered locus">Mrad2831_1011</name>
</gene>
<name>HIS2_METRJ</name>
<reference key="1">
    <citation type="submission" date="2008-03" db="EMBL/GenBank/DDBJ databases">
        <title>Complete sequence of chromosome of Methylobacterium radiotolerans JCM 2831.</title>
        <authorList>
            <consortium name="US DOE Joint Genome Institute"/>
            <person name="Copeland A."/>
            <person name="Lucas S."/>
            <person name="Lapidus A."/>
            <person name="Glavina del Rio T."/>
            <person name="Dalin E."/>
            <person name="Tice H."/>
            <person name="Bruce D."/>
            <person name="Goodwin L."/>
            <person name="Pitluck S."/>
            <person name="Kiss H."/>
            <person name="Brettin T."/>
            <person name="Detter J.C."/>
            <person name="Han C."/>
            <person name="Kuske C.R."/>
            <person name="Schmutz J."/>
            <person name="Larimer F."/>
            <person name="Land M."/>
            <person name="Hauser L."/>
            <person name="Kyrpides N."/>
            <person name="Mikhailova N."/>
            <person name="Marx C.J."/>
            <person name="Richardson P."/>
        </authorList>
    </citation>
    <scope>NUCLEOTIDE SEQUENCE [LARGE SCALE GENOMIC DNA]</scope>
    <source>
        <strain>ATCC 27329 / DSM 1819 / JCM 2831 / NBRC 15690 / NCIMB 10815 / 0-1</strain>
    </source>
</reference>
<feature type="chain" id="PRO_1000190381" description="Phosphoribosyl-ATP pyrophosphatase">
    <location>
        <begin position="1"/>
        <end position="107"/>
    </location>
</feature>
<sequence length="107" mass="11050">MTAYTLADLAALVASRAGTDPATSYTAKLLSEGPAKAAKKLGEEAVEAAIAAVQGDKTGLRNEAADVLYHLVVLLWAGGVELDAVMAELERRTAQSGIAEKAARRPA</sequence>
<protein>
    <recommendedName>
        <fullName evidence="1">Phosphoribosyl-ATP pyrophosphatase</fullName>
        <shortName evidence="1">PRA-PH</shortName>
        <ecNumber evidence="1">3.6.1.31</ecNumber>
    </recommendedName>
</protein>
<comment type="catalytic activity">
    <reaction evidence="1">
        <text>1-(5-phospho-beta-D-ribosyl)-ATP + H2O = 1-(5-phospho-beta-D-ribosyl)-5'-AMP + diphosphate + H(+)</text>
        <dbReference type="Rhea" id="RHEA:22828"/>
        <dbReference type="ChEBI" id="CHEBI:15377"/>
        <dbReference type="ChEBI" id="CHEBI:15378"/>
        <dbReference type="ChEBI" id="CHEBI:33019"/>
        <dbReference type="ChEBI" id="CHEBI:59457"/>
        <dbReference type="ChEBI" id="CHEBI:73183"/>
        <dbReference type="EC" id="3.6.1.31"/>
    </reaction>
</comment>
<comment type="pathway">
    <text evidence="1">Amino-acid biosynthesis; L-histidine biosynthesis; L-histidine from 5-phospho-alpha-D-ribose 1-diphosphate: step 2/9.</text>
</comment>
<comment type="subcellular location">
    <subcellularLocation>
        <location evidence="1">Cytoplasm</location>
    </subcellularLocation>
</comment>
<comment type="similarity">
    <text evidence="1">Belongs to the PRA-PH family.</text>
</comment>
<proteinExistence type="inferred from homology"/>
<evidence type="ECO:0000255" key="1">
    <source>
        <dbReference type="HAMAP-Rule" id="MF_01020"/>
    </source>
</evidence>
<dbReference type="EC" id="3.6.1.31" evidence="1"/>
<dbReference type="EMBL" id="CP001001">
    <property type="protein sequence ID" value="ACB23020.1"/>
    <property type="molecule type" value="Genomic_DNA"/>
</dbReference>
<dbReference type="RefSeq" id="WP_012318013.1">
    <property type="nucleotide sequence ID" value="NC_010505.1"/>
</dbReference>
<dbReference type="SMR" id="B1M0Q0"/>
<dbReference type="STRING" id="426355.Mrad2831_1011"/>
<dbReference type="GeneID" id="6137028"/>
<dbReference type="KEGG" id="mrd:Mrad2831_1011"/>
<dbReference type="PATRIC" id="fig|426355.14.peg.1052"/>
<dbReference type="eggNOG" id="COG0140">
    <property type="taxonomic scope" value="Bacteria"/>
</dbReference>
<dbReference type="HOGENOM" id="CLU_123337_1_1_5"/>
<dbReference type="OrthoDB" id="9814738at2"/>
<dbReference type="UniPathway" id="UPA00031">
    <property type="reaction ID" value="UER00007"/>
</dbReference>
<dbReference type="Proteomes" id="UP000006589">
    <property type="component" value="Chromosome"/>
</dbReference>
<dbReference type="GO" id="GO:0005737">
    <property type="term" value="C:cytoplasm"/>
    <property type="evidence" value="ECO:0007669"/>
    <property type="project" value="UniProtKB-SubCell"/>
</dbReference>
<dbReference type="GO" id="GO:0005524">
    <property type="term" value="F:ATP binding"/>
    <property type="evidence" value="ECO:0007669"/>
    <property type="project" value="UniProtKB-KW"/>
</dbReference>
<dbReference type="GO" id="GO:0004636">
    <property type="term" value="F:phosphoribosyl-ATP diphosphatase activity"/>
    <property type="evidence" value="ECO:0007669"/>
    <property type="project" value="UniProtKB-UniRule"/>
</dbReference>
<dbReference type="GO" id="GO:0000105">
    <property type="term" value="P:L-histidine biosynthetic process"/>
    <property type="evidence" value="ECO:0007669"/>
    <property type="project" value="UniProtKB-UniRule"/>
</dbReference>
<dbReference type="CDD" id="cd11534">
    <property type="entry name" value="NTP-PPase_HisIE_like"/>
    <property type="match status" value="1"/>
</dbReference>
<dbReference type="Gene3D" id="1.10.287.1080">
    <property type="entry name" value="MazG-like"/>
    <property type="match status" value="1"/>
</dbReference>
<dbReference type="HAMAP" id="MF_01020">
    <property type="entry name" value="HisE"/>
    <property type="match status" value="1"/>
</dbReference>
<dbReference type="InterPro" id="IPR008179">
    <property type="entry name" value="HisE"/>
</dbReference>
<dbReference type="InterPro" id="IPR021130">
    <property type="entry name" value="PRib-ATP_PPHydrolase-like"/>
</dbReference>
<dbReference type="NCBIfam" id="TIGR03188">
    <property type="entry name" value="histidine_hisI"/>
    <property type="match status" value="1"/>
</dbReference>
<dbReference type="NCBIfam" id="NF001613">
    <property type="entry name" value="PRK00400.1-5"/>
    <property type="match status" value="1"/>
</dbReference>
<dbReference type="PANTHER" id="PTHR42945">
    <property type="entry name" value="HISTIDINE BIOSYNTHESIS BIFUNCTIONAL PROTEIN"/>
    <property type="match status" value="1"/>
</dbReference>
<dbReference type="PANTHER" id="PTHR42945:SF1">
    <property type="entry name" value="HISTIDINE BIOSYNTHESIS BIFUNCTIONAL PROTEIN HIS7"/>
    <property type="match status" value="1"/>
</dbReference>
<dbReference type="Pfam" id="PF01503">
    <property type="entry name" value="PRA-PH"/>
    <property type="match status" value="1"/>
</dbReference>
<dbReference type="SUPFAM" id="SSF101386">
    <property type="entry name" value="all-alpha NTP pyrophosphatases"/>
    <property type="match status" value="1"/>
</dbReference>
<accession>B1M0Q0</accession>
<keyword id="KW-0028">Amino-acid biosynthesis</keyword>
<keyword id="KW-0067">ATP-binding</keyword>
<keyword id="KW-0963">Cytoplasm</keyword>
<keyword id="KW-0368">Histidine biosynthesis</keyword>
<keyword id="KW-0378">Hydrolase</keyword>
<keyword id="KW-0547">Nucleotide-binding</keyword>